<gene>
    <name evidence="1" type="primary">mtnK</name>
    <name type="ordered locus">YpAngola_A3327</name>
</gene>
<feature type="chain" id="PRO_0000357351" description="Methylthioribose kinase">
    <location>
        <begin position="1"/>
        <end position="407"/>
    </location>
</feature>
<feature type="binding site" evidence="1">
    <location>
        <position position="40"/>
    </location>
    <ligand>
        <name>ATP</name>
        <dbReference type="ChEBI" id="CHEBI:30616"/>
    </ligand>
</feature>
<feature type="binding site" evidence="1">
    <location>
        <position position="57"/>
    </location>
    <ligand>
        <name>ATP</name>
        <dbReference type="ChEBI" id="CHEBI:30616"/>
    </ligand>
</feature>
<feature type="binding site" evidence="1">
    <location>
        <begin position="111"/>
        <end position="113"/>
    </location>
    <ligand>
        <name>ATP</name>
        <dbReference type="ChEBI" id="CHEBI:30616"/>
    </ligand>
</feature>
<feature type="binding site" evidence="1">
    <location>
        <position position="229"/>
    </location>
    <ligand>
        <name>substrate</name>
    </ligand>
</feature>
<feature type="binding site" evidence="1">
    <location>
        <begin position="246"/>
        <end position="248"/>
    </location>
    <ligand>
        <name>ATP</name>
        <dbReference type="ChEBI" id="CHEBI:30616"/>
    </ligand>
</feature>
<feature type="binding site" evidence="1">
    <location>
        <position position="344"/>
    </location>
    <ligand>
        <name>substrate</name>
    </ligand>
</feature>
<name>MTNK_YERPG</name>
<protein>
    <recommendedName>
        <fullName evidence="1">Methylthioribose kinase</fullName>
        <shortName evidence="1">MTR kinase</shortName>
        <ecNumber evidence="1">2.7.1.100</ecNumber>
    </recommendedName>
</protein>
<organism>
    <name type="scientific">Yersinia pestis bv. Antiqua (strain Angola)</name>
    <dbReference type="NCBI Taxonomy" id="349746"/>
    <lineage>
        <taxon>Bacteria</taxon>
        <taxon>Pseudomonadati</taxon>
        <taxon>Pseudomonadota</taxon>
        <taxon>Gammaproteobacteria</taxon>
        <taxon>Enterobacterales</taxon>
        <taxon>Yersiniaceae</taxon>
        <taxon>Yersinia</taxon>
    </lineage>
</organism>
<evidence type="ECO:0000255" key="1">
    <source>
        <dbReference type="HAMAP-Rule" id="MF_01683"/>
    </source>
</evidence>
<evidence type="ECO:0000305" key="2"/>
<comment type="function">
    <text evidence="1">Catalyzes the phosphorylation of methylthioribose into methylthioribose-1-phosphate.</text>
</comment>
<comment type="catalytic activity">
    <reaction evidence="1">
        <text>5-(methylsulfanyl)-D-ribose + ATP = 5-(methylsulfanyl)-alpha-D-ribose 1-phosphate + ADP + H(+)</text>
        <dbReference type="Rhea" id="RHEA:22312"/>
        <dbReference type="ChEBI" id="CHEBI:15378"/>
        <dbReference type="ChEBI" id="CHEBI:30616"/>
        <dbReference type="ChEBI" id="CHEBI:58533"/>
        <dbReference type="ChEBI" id="CHEBI:78440"/>
        <dbReference type="ChEBI" id="CHEBI:456216"/>
        <dbReference type="EC" id="2.7.1.100"/>
    </reaction>
</comment>
<comment type="pathway">
    <text evidence="1">Amino-acid biosynthesis; L-methionine biosynthesis via salvage pathway; S-methyl-5-thio-alpha-D-ribose 1-phosphate from S-methyl-5'-thioadenosine (hydrolase route): step 2/2.</text>
</comment>
<comment type="subunit">
    <text evidence="1">Homodimer.</text>
</comment>
<comment type="similarity">
    <text evidence="1">Belongs to the methylthioribose kinase family.</text>
</comment>
<comment type="sequence caution" evidence="2">
    <conflict type="erroneous initiation">
        <sequence resource="EMBL-CDS" id="ABX87016"/>
    </conflict>
</comment>
<dbReference type="EC" id="2.7.1.100" evidence="1"/>
<dbReference type="EMBL" id="CP000901">
    <property type="protein sequence ID" value="ABX87016.1"/>
    <property type="status" value="ALT_INIT"/>
    <property type="molecule type" value="Genomic_DNA"/>
</dbReference>
<dbReference type="RefSeq" id="WP_011906390.1">
    <property type="nucleotide sequence ID" value="NZ_CP009935.1"/>
</dbReference>
<dbReference type="SMR" id="A9R2Z4"/>
<dbReference type="KEGG" id="ypg:YpAngola_A3327"/>
<dbReference type="PATRIC" id="fig|349746.12.peg.26"/>
<dbReference type="UniPathway" id="UPA00904">
    <property type="reaction ID" value="UER00872"/>
</dbReference>
<dbReference type="GO" id="GO:0005524">
    <property type="term" value="F:ATP binding"/>
    <property type="evidence" value="ECO:0007669"/>
    <property type="project" value="UniProtKB-UniRule"/>
</dbReference>
<dbReference type="GO" id="GO:0046522">
    <property type="term" value="F:S-methyl-5-thioribose kinase activity"/>
    <property type="evidence" value="ECO:0007669"/>
    <property type="project" value="UniProtKB-UniRule"/>
</dbReference>
<dbReference type="GO" id="GO:0019509">
    <property type="term" value="P:L-methionine salvage from methylthioadenosine"/>
    <property type="evidence" value="ECO:0007669"/>
    <property type="project" value="UniProtKB-UniRule"/>
</dbReference>
<dbReference type="Gene3D" id="3.90.1200.10">
    <property type="match status" value="1"/>
</dbReference>
<dbReference type="Gene3D" id="3.30.200.20">
    <property type="entry name" value="Phosphorylase Kinase, domain 1"/>
    <property type="match status" value="1"/>
</dbReference>
<dbReference type="HAMAP" id="MF_01683">
    <property type="entry name" value="Salvage_MtnK"/>
    <property type="match status" value="1"/>
</dbReference>
<dbReference type="InterPro" id="IPR002575">
    <property type="entry name" value="Aminoglycoside_PTrfase"/>
</dbReference>
<dbReference type="InterPro" id="IPR011009">
    <property type="entry name" value="Kinase-like_dom_sf"/>
</dbReference>
<dbReference type="InterPro" id="IPR009212">
    <property type="entry name" value="Methylthioribose_kinase"/>
</dbReference>
<dbReference type="NCBIfam" id="TIGR01767">
    <property type="entry name" value="MTRK"/>
    <property type="match status" value="1"/>
</dbReference>
<dbReference type="PANTHER" id="PTHR34273">
    <property type="entry name" value="METHYLTHIORIBOSE KINASE"/>
    <property type="match status" value="1"/>
</dbReference>
<dbReference type="PANTHER" id="PTHR34273:SF2">
    <property type="entry name" value="METHYLTHIORIBOSE KINASE"/>
    <property type="match status" value="1"/>
</dbReference>
<dbReference type="Pfam" id="PF01636">
    <property type="entry name" value="APH"/>
    <property type="match status" value="1"/>
</dbReference>
<dbReference type="PIRSF" id="PIRSF031134">
    <property type="entry name" value="MTRK"/>
    <property type="match status" value="1"/>
</dbReference>
<dbReference type="SUPFAM" id="SSF56112">
    <property type="entry name" value="Protein kinase-like (PK-like)"/>
    <property type="match status" value="1"/>
</dbReference>
<keyword id="KW-0028">Amino-acid biosynthesis</keyword>
<keyword id="KW-0067">ATP-binding</keyword>
<keyword id="KW-0418">Kinase</keyword>
<keyword id="KW-0486">Methionine biosynthesis</keyword>
<keyword id="KW-0547">Nucleotide-binding</keyword>
<keyword id="KW-0808">Transferase</keyword>
<sequence length="407" mass="45283">MSRYHTFTAADAVEYARQFGQVADPQALVTADEIGDGNLNLVFKIRDTAGISRVIVKQALPYVRCVGESWPLMLDRARIEAETLLTHSQFCPQHTVKVLHHDAELAVMVQEDLSDHHIWRHELIQGNYYPQAAEQLGEYLAQTLFHTSDFYQSAQAKKAAVSRYTNPELCQITEDLFFTDPYIEHERNNFDPVLLPEVLSLRQDKALKLAVASLKHRFLSQAEALLHGDIHSGSIFVADGRLKTIDAEFGFYGPIGFDIGTALGNLLLNYCGLPGLAGPRDAAAGREQRLNDVQTVWQTFAARFLALSQEKAQDPALATEGYAAQFLQHVWRDAIGYCGSELIRRTIGLAHVADLDSIDDQEMRRACQRHALSLGRALILVAPHVDDVGGVVARIRQSPSSLTPQRC</sequence>
<reference key="1">
    <citation type="journal article" date="2010" name="J. Bacteriol.">
        <title>Genome sequence of the deep-rooted Yersinia pestis strain Angola reveals new insights into the evolution and pangenome of the plague bacterium.</title>
        <authorList>
            <person name="Eppinger M."/>
            <person name="Worsham P.L."/>
            <person name="Nikolich M.P."/>
            <person name="Riley D.R."/>
            <person name="Sebastian Y."/>
            <person name="Mou S."/>
            <person name="Achtman M."/>
            <person name="Lindler L.E."/>
            <person name="Ravel J."/>
        </authorList>
    </citation>
    <scope>NUCLEOTIDE SEQUENCE [LARGE SCALE GENOMIC DNA]</scope>
    <source>
        <strain>Angola</strain>
    </source>
</reference>
<accession>A9R2Z4</accession>
<proteinExistence type="inferred from homology"/>